<gene>
    <name evidence="1" type="primary">argC</name>
    <name type="ordered locus">Swoo_0329</name>
</gene>
<protein>
    <recommendedName>
        <fullName evidence="1">N-acetyl-gamma-glutamyl-phosphate reductase</fullName>
        <shortName evidence="1">AGPR</shortName>
        <ecNumber evidence="1">1.2.1.38</ecNumber>
    </recommendedName>
    <alternativeName>
        <fullName evidence="1">N-acetyl-glutamate semialdehyde dehydrogenase</fullName>
        <shortName evidence="1">NAGSA dehydrogenase</shortName>
    </alternativeName>
</protein>
<comment type="function">
    <text evidence="1">Catalyzes the NADPH-dependent reduction of N-acetyl-5-glutamyl phosphate to yield N-acetyl-L-glutamate 5-semialdehyde.</text>
</comment>
<comment type="catalytic activity">
    <reaction evidence="1">
        <text>N-acetyl-L-glutamate 5-semialdehyde + phosphate + NADP(+) = N-acetyl-L-glutamyl 5-phosphate + NADPH + H(+)</text>
        <dbReference type="Rhea" id="RHEA:21588"/>
        <dbReference type="ChEBI" id="CHEBI:15378"/>
        <dbReference type="ChEBI" id="CHEBI:29123"/>
        <dbReference type="ChEBI" id="CHEBI:43474"/>
        <dbReference type="ChEBI" id="CHEBI:57783"/>
        <dbReference type="ChEBI" id="CHEBI:57936"/>
        <dbReference type="ChEBI" id="CHEBI:58349"/>
        <dbReference type="EC" id="1.2.1.38"/>
    </reaction>
</comment>
<comment type="pathway">
    <text evidence="1">Amino-acid biosynthesis; L-arginine biosynthesis; N(2)-acetyl-L-ornithine from L-glutamate: step 3/4.</text>
</comment>
<comment type="subcellular location">
    <subcellularLocation>
        <location evidence="1">Cytoplasm</location>
    </subcellularLocation>
</comment>
<comment type="similarity">
    <text evidence="1">Belongs to the NAGSA dehydrogenase family. Type 1 subfamily.</text>
</comment>
<evidence type="ECO:0000255" key="1">
    <source>
        <dbReference type="HAMAP-Rule" id="MF_00150"/>
    </source>
</evidence>
<reference key="1">
    <citation type="submission" date="2008-02" db="EMBL/GenBank/DDBJ databases">
        <title>Complete sequence of Shewanella woodyi ATCC 51908.</title>
        <authorList>
            <consortium name="US DOE Joint Genome Institute"/>
            <person name="Copeland A."/>
            <person name="Lucas S."/>
            <person name="Lapidus A."/>
            <person name="Glavina del Rio T."/>
            <person name="Dalin E."/>
            <person name="Tice H."/>
            <person name="Bruce D."/>
            <person name="Goodwin L."/>
            <person name="Pitluck S."/>
            <person name="Sims D."/>
            <person name="Brettin T."/>
            <person name="Detter J.C."/>
            <person name="Han C."/>
            <person name="Kuske C.R."/>
            <person name="Schmutz J."/>
            <person name="Larimer F."/>
            <person name="Land M."/>
            <person name="Hauser L."/>
            <person name="Kyrpides N."/>
            <person name="Lykidis A."/>
            <person name="Zhao J.-S."/>
            <person name="Richardson P."/>
        </authorList>
    </citation>
    <scope>NUCLEOTIDE SEQUENCE [LARGE SCALE GENOMIC DNA]</scope>
    <source>
        <strain>ATCC 51908 / MS32</strain>
    </source>
</reference>
<accession>B1KND3</accession>
<name>ARGC_SHEWM</name>
<feature type="chain" id="PRO_1000096738" description="N-acetyl-gamma-glutamyl-phosphate reductase">
    <location>
        <begin position="1"/>
        <end position="326"/>
    </location>
</feature>
<feature type="active site" evidence="1">
    <location>
        <position position="155"/>
    </location>
</feature>
<keyword id="KW-0028">Amino-acid biosynthesis</keyword>
<keyword id="KW-0055">Arginine biosynthesis</keyword>
<keyword id="KW-0963">Cytoplasm</keyword>
<keyword id="KW-0521">NADP</keyword>
<keyword id="KW-0560">Oxidoreductase</keyword>
<keyword id="KW-1185">Reference proteome</keyword>
<dbReference type="EC" id="1.2.1.38" evidence="1"/>
<dbReference type="EMBL" id="CP000961">
    <property type="protein sequence ID" value="ACA84630.1"/>
    <property type="molecule type" value="Genomic_DNA"/>
</dbReference>
<dbReference type="RefSeq" id="WP_012322979.1">
    <property type="nucleotide sequence ID" value="NC_010506.1"/>
</dbReference>
<dbReference type="SMR" id="B1KND3"/>
<dbReference type="STRING" id="392500.Swoo_0329"/>
<dbReference type="KEGG" id="swd:Swoo_0329"/>
<dbReference type="eggNOG" id="COG0002">
    <property type="taxonomic scope" value="Bacteria"/>
</dbReference>
<dbReference type="HOGENOM" id="CLU_006384_0_1_6"/>
<dbReference type="UniPathway" id="UPA00068">
    <property type="reaction ID" value="UER00108"/>
</dbReference>
<dbReference type="Proteomes" id="UP000002168">
    <property type="component" value="Chromosome"/>
</dbReference>
<dbReference type="GO" id="GO:0005737">
    <property type="term" value="C:cytoplasm"/>
    <property type="evidence" value="ECO:0007669"/>
    <property type="project" value="UniProtKB-SubCell"/>
</dbReference>
<dbReference type="GO" id="GO:0003942">
    <property type="term" value="F:N-acetyl-gamma-glutamyl-phosphate reductase activity"/>
    <property type="evidence" value="ECO:0007669"/>
    <property type="project" value="UniProtKB-UniRule"/>
</dbReference>
<dbReference type="GO" id="GO:0051287">
    <property type="term" value="F:NAD binding"/>
    <property type="evidence" value="ECO:0007669"/>
    <property type="project" value="InterPro"/>
</dbReference>
<dbReference type="GO" id="GO:0070401">
    <property type="term" value="F:NADP+ binding"/>
    <property type="evidence" value="ECO:0007669"/>
    <property type="project" value="InterPro"/>
</dbReference>
<dbReference type="GO" id="GO:0006526">
    <property type="term" value="P:L-arginine biosynthetic process"/>
    <property type="evidence" value="ECO:0007669"/>
    <property type="project" value="UniProtKB-UniRule"/>
</dbReference>
<dbReference type="CDD" id="cd23934">
    <property type="entry name" value="AGPR_1_C"/>
    <property type="match status" value="1"/>
</dbReference>
<dbReference type="CDD" id="cd17895">
    <property type="entry name" value="AGPR_1_N"/>
    <property type="match status" value="1"/>
</dbReference>
<dbReference type="FunFam" id="3.30.360.10:FF:000014">
    <property type="entry name" value="N-acetyl-gamma-glutamyl-phosphate reductase"/>
    <property type="match status" value="1"/>
</dbReference>
<dbReference type="Gene3D" id="3.30.360.10">
    <property type="entry name" value="Dihydrodipicolinate Reductase, domain 2"/>
    <property type="match status" value="1"/>
</dbReference>
<dbReference type="Gene3D" id="3.40.50.720">
    <property type="entry name" value="NAD(P)-binding Rossmann-like Domain"/>
    <property type="match status" value="1"/>
</dbReference>
<dbReference type="HAMAP" id="MF_00150">
    <property type="entry name" value="ArgC_type1"/>
    <property type="match status" value="1"/>
</dbReference>
<dbReference type="InterPro" id="IPR023013">
    <property type="entry name" value="AGPR_AS"/>
</dbReference>
<dbReference type="InterPro" id="IPR000706">
    <property type="entry name" value="AGPR_type-1"/>
</dbReference>
<dbReference type="InterPro" id="IPR036291">
    <property type="entry name" value="NAD(P)-bd_dom_sf"/>
</dbReference>
<dbReference type="InterPro" id="IPR050085">
    <property type="entry name" value="NAGSA_dehydrogenase"/>
</dbReference>
<dbReference type="InterPro" id="IPR000534">
    <property type="entry name" value="Semialdehyde_DH_NAD-bd"/>
</dbReference>
<dbReference type="NCBIfam" id="TIGR01850">
    <property type="entry name" value="argC"/>
    <property type="match status" value="1"/>
</dbReference>
<dbReference type="PANTHER" id="PTHR32338:SF10">
    <property type="entry name" value="N-ACETYL-GAMMA-GLUTAMYL-PHOSPHATE REDUCTASE, CHLOROPLASTIC-RELATED"/>
    <property type="match status" value="1"/>
</dbReference>
<dbReference type="PANTHER" id="PTHR32338">
    <property type="entry name" value="N-ACETYL-GAMMA-GLUTAMYL-PHOSPHATE REDUCTASE, CHLOROPLASTIC-RELATED-RELATED"/>
    <property type="match status" value="1"/>
</dbReference>
<dbReference type="Pfam" id="PF01118">
    <property type="entry name" value="Semialdhyde_dh"/>
    <property type="match status" value="1"/>
</dbReference>
<dbReference type="Pfam" id="PF22698">
    <property type="entry name" value="Semialdhyde_dhC_1"/>
    <property type="match status" value="1"/>
</dbReference>
<dbReference type="SMART" id="SM00859">
    <property type="entry name" value="Semialdhyde_dh"/>
    <property type="match status" value="1"/>
</dbReference>
<dbReference type="SUPFAM" id="SSF55347">
    <property type="entry name" value="Glyceraldehyde-3-phosphate dehydrogenase-like, C-terminal domain"/>
    <property type="match status" value="1"/>
</dbReference>
<dbReference type="SUPFAM" id="SSF51735">
    <property type="entry name" value="NAD(P)-binding Rossmann-fold domains"/>
    <property type="match status" value="1"/>
</dbReference>
<dbReference type="PROSITE" id="PS01224">
    <property type="entry name" value="ARGC"/>
    <property type="match status" value="1"/>
</dbReference>
<organism>
    <name type="scientific">Shewanella woodyi (strain ATCC 51908 / MS32)</name>
    <dbReference type="NCBI Taxonomy" id="392500"/>
    <lineage>
        <taxon>Bacteria</taxon>
        <taxon>Pseudomonadati</taxon>
        <taxon>Pseudomonadota</taxon>
        <taxon>Gammaproteobacteria</taxon>
        <taxon>Alteromonadales</taxon>
        <taxon>Shewanellaceae</taxon>
        <taxon>Shewanella</taxon>
    </lineage>
</organism>
<proteinExistence type="inferred from homology"/>
<sequence length="326" mass="35311">MKSIAIIGASGYTGAQITSLIDADKNLVIQGLYVSENSVDKGKPLSELYPTYSHISLPLSPLSDEAKALIAEQADGVVLATDHAVSLHLAAWFFEQGLTVFDLSGAYRFSDKSQYPQWYGFEHDYPQVLSHAVYGLAEWNGADIADSKMIAVPGCYPTASLTALKPIHSLMTSSLPVINAVSGVTGAGRKAQLNTSFCEVSLTPYGVLGHRHQPEIATQLGQEVIFTPHLGNFKRGILATITVQLKEGVTQADIEQAYAIYDNAPLVTVKQNQFPKVDDVTNTPNCHLGWKFDPKTGYLVVASAIDNLMKGAASQAHQCIKIHFKY</sequence>